<organism evidence="3">
    <name type="scientific">Crotalus lutosus</name>
    <name type="common">Great basin rattlesnake</name>
    <name type="synonym">Crotalus oreganus lutosus</name>
    <dbReference type="NCBI Taxonomy" id="332626"/>
    <lineage>
        <taxon>Eukaryota</taxon>
        <taxon>Metazoa</taxon>
        <taxon>Chordata</taxon>
        <taxon>Craniata</taxon>
        <taxon>Vertebrata</taxon>
        <taxon>Euteleostomi</taxon>
        <taxon>Lepidosauria</taxon>
        <taxon>Squamata</taxon>
        <taxon>Bifurcata</taxon>
        <taxon>Unidentata</taxon>
        <taxon>Episquamata</taxon>
        <taxon>Toxicofera</taxon>
        <taxon>Serpentes</taxon>
        <taxon>Colubroidea</taxon>
        <taxon>Viperidae</taxon>
        <taxon>Crotalinae</taxon>
        <taxon>Crotalus</taxon>
    </lineage>
</organism>
<name>PA2BC_CROLT</name>
<feature type="chain" id="PRO_0000436391" description="Basic phospholipase A2 ColTx-1" evidence="2">
    <location>
        <begin position="1"/>
        <end position="47" status="greater than"/>
    </location>
</feature>
<feature type="active site" evidence="1">
    <location>
        <position position="47"/>
    </location>
</feature>
<feature type="binding site" evidence="1">
    <location>
        <position position="27"/>
    </location>
    <ligand>
        <name>Ca(2+)</name>
        <dbReference type="ChEBI" id="CHEBI:29108"/>
    </ligand>
</feature>
<feature type="binding site" evidence="1">
    <location>
        <position position="29"/>
    </location>
    <ligand>
        <name>Ca(2+)</name>
        <dbReference type="ChEBI" id="CHEBI:29108"/>
    </ligand>
</feature>
<feature type="binding site" evidence="1">
    <location>
        <position position="31"/>
    </location>
    <ligand>
        <name>Ca(2+)</name>
        <dbReference type="ChEBI" id="CHEBI:29108"/>
    </ligand>
</feature>
<feature type="disulfide bond" evidence="1">
    <location>
        <begin position="26"/>
        <end status="unknown"/>
    </location>
</feature>
<feature type="disulfide bond" evidence="1">
    <location>
        <begin position="28"/>
        <end position="44"/>
    </location>
</feature>
<feature type="disulfide bond" evidence="1">
    <location>
        <begin position="43"/>
        <end status="unknown"/>
    </location>
</feature>
<feature type="non-terminal residue" evidence="2">
    <location>
        <position position="47"/>
    </location>
</feature>
<accession>C0HK05</accession>
<proteinExistence type="evidence at protein level"/>
<sequence length="47" mass="5547">HLLQFNKMIKFETRKNAIPFYAFYGCYCGWGGRGRPKDATDRCCFVH</sequence>
<keyword id="KW-0106">Calcium</keyword>
<keyword id="KW-0903">Direct protein sequencing</keyword>
<keyword id="KW-1015">Disulfide bond</keyword>
<keyword id="KW-0378">Hydrolase</keyword>
<keyword id="KW-0442">Lipid degradation</keyword>
<keyword id="KW-0443">Lipid metabolism</keyword>
<keyword id="KW-0479">Metal-binding</keyword>
<keyword id="KW-0959">Myotoxin</keyword>
<keyword id="KW-0964">Secreted</keyword>
<keyword id="KW-0800">Toxin</keyword>
<protein>
    <recommendedName>
        <fullName evidence="5">Basic phospholipase A2 ColTx-1</fullName>
        <shortName evidence="1">svPLA2</shortName>
        <ecNumber evidence="2">3.1.1.4</ecNumber>
    </recommendedName>
    <alternativeName>
        <fullName evidence="3">Basic phospholipase A2 ColTx-I</fullName>
    </alternativeName>
    <alternativeName>
        <fullName evidence="1">Phosphatidylcholine 2-acylhydrolase</fullName>
    </alternativeName>
</protein>
<evidence type="ECO:0000250" key="1">
    <source>
        <dbReference type="UniProtKB" id="P14421"/>
    </source>
</evidence>
<evidence type="ECO:0000269" key="2">
    <source>
    </source>
</evidence>
<evidence type="ECO:0000303" key="3">
    <source>
    </source>
</evidence>
<evidence type="ECO:0000305" key="4"/>
<evidence type="ECO:0000305" key="5">
    <source>
    </source>
</evidence>
<comment type="function">
    <text evidence="2">Snake venom phospholipase A2 (PLA2) that shows edema-inducing activity and local and systemic myotoxicity. PLA2 catalyzes the calcium-dependent hydrolysis of the 2-acyl groups in 3-sn-phosphoglycerides.</text>
</comment>
<comment type="catalytic activity">
    <reaction evidence="2">
        <text>a 1,2-diacyl-sn-glycero-3-phosphocholine + H2O = a 1-acyl-sn-glycero-3-phosphocholine + a fatty acid + H(+)</text>
        <dbReference type="Rhea" id="RHEA:15801"/>
        <dbReference type="ChEBI" id="CHEBI:15377"/>
        <dbReference type="ChEBI" id="CHEBI:15378"/>
        <dbReference type="ChEBI" id="CHEBI:28868"/>
        <dbReference type="ChEBI" id="CHEBI:57643"/>
        <dbReference type="ChEBI" id="CHEBI:58168"/>
        <dbReference type="EC" id="3.1.1.4"/>
    </reaction>
</comment>
<comment type="cofactor">
    <cofactor evidence="2">
        <name>Ca(2+)</name>
        <dbReference type="ChEBI" id="CHEBI:29108"/>
    </cofactor>
    <text evidence="1">Binds 1 Ca(2+) ion.</text>
</comment>
<comment type="activity regulation">
    <text evidence="2">In the presence of Ca(2+) ions, activated by Mn(2+) or Mg(2+) ions. Inhibited by Cd(2+) or Zn(2+) ions. Inhibited by metal chelators EDTA and EGTA.</text>
</comment>
<comment type="biophysicochemical properties">
    <kinetics>
        <KM evidence="2">8.09 mM for 4-nitro-3-octanoyl benzioc acid (NOBA)</KM>
        <Vmax evidence="2">15.97 nmol/min/mg enzyme with NOBA as substrate</Vmax>
    </kinetics>
    <phDependence>
        <text evidence="2">Optimum pH is 8.0.</text>
    </phDependence>
    <temperatureDependence>
        <text evidence="2">Optimum temperature is 37 degrees Celsius.</text>
    </temperatureDependence>
</comment>
<comment type="subcellular location">
    <subcellularLocation>
        <location evidence="2">Secreted</location>
    </subcellularLocation>
</comment>
<comment type="tissue specificity">
    <text evidence="5">Expressed by the venom gland.</text>
</comment>
<comment type="mass spectrometry" mass="14145.0" method="MALDI" evidence="2"/>
<comment type="similarity">
    <text evidence="4">Belongs to the phospholipase A2 family. Group II subfamily. D49 sub-subfamily.</text>
</comment>
<dbReference type="EC" id="3.1.1.4" evidence="2"/>
<dbReference type="SMR" id="C0HK05"/>
<dbReference type="BRENDA" id="3.1.1.4">
    <property type="organism ID" value="8635"/>
</dbReference>
<dbReference type="SABIO-RK" id="C0HK05"/>
<dbReference type="GO" id="GO:0005576">
    <property type="term" value="C:extracellular region"/>
    <property type="evidence" value="ECO:0007669"/>
    <property type="project" value="UniProtKB-SubCell"/>
</dbReference>
<dbReference type="GO" id="GO:0005509">
    <property type="term" value="F:calcium ion binding"/>
    <property type="evidence" value="ECO:0007669"/>
    <property type="project" value="InterPro"/>
</dbReference>
<dbReference type="GO" id="GO:0047498">
    <property type="term" value="F:calcium-dependent phospholipase A2 activity"/>
    <property type="evidence" value="ECO:0007669"/>
    <property type="project" value="TreeGrafter"/>
</dbReference>
<dbReference type="GO" id="GO:0005543">
    <property type="term" value="F:phospholipid binding"/>
    <property type="evidence" value="ECO:0007669"/>
    <property type="project" value="TreeGrafter"/>
</dbReference>
<dbReference type="GO" id="GO:0090729">
    <property type="term" value="F:toxin activity"/>
    <property type="evidence" value="ECO:0007669"/>
    <property type="project" value="UniProtKB-KW"/>
</dbReference>
<dbReference type="GO" id="GO:0050482">
    <property type="term" value="P:arachidonate secretion"/>
    <property type="evidence" value="ECO:0007669"/>
    <property type="project" value="InterPro"/>
</dbReference>
<dbReference type="GO" id="GO:0016042">
    <property type="term" value="P:lipid catabolic process"/>
    <property type="evidence" value="ECO:0007669"/>
    <property type="project" value="UniProtKB-KW"/>
</dbReference>
<dbReference type="GO" id="GO:0042130">
    <property type="term" value="P:negative regulation of T cell proliferation"/>
    <property type="evidence" value="ECO:0007669"/>
    <property type="project" value="TreeGrafter"/>
</dbReference>
<dbReference type="GO" id="GO:0006644">
    <property type="term" value="P:phospholipid metabolic process"/>
    <property type="evidence" value="ECO:0007669"/>
    <property type="project" value="InterPro"/>
</dbReference>
<dbReference type="Gene3D" id="1.20.90.10">
    <property type="entry name" value="Phospholipase A2 domain"/>
    <property type="match status" value="1"/>
</dbReference>
<dbReference type="InterPro" id="IPR001211">
    <property type="entry name" value="PLipase_A2"/>
</dbReference>
<dbReference type="InterPro" id="IPR016090">
    <property type="entry name" value="PLipase_A2_dom"/>
</dbReference>
<dbReference type="InterPro" id="IPR036444">
    <property type="entry name" value="PLipase_A2_dom_sf"/>
</dbReference>
<dbReference type="PANTHER" id="PTHR11716">
    <property type="entry name" value="PHOSPHOLIPASE A2 FAMILY MEMBER"/>
    <property type="match status" value="1"/>
</dbReference>
<dbReference type="PANTHER" id="PTHR11716:SF9">
    <property type="entry name" value="PHOSPHOLIPASE A2, MEMBRANE ASSOCIATED"/>
    <property type="match status" value="1"/>
</dbReference>
<dbReference type="Pfam" id="PF00068">
    <property type="entry name" value="Phospholip_A2_1"/>
    <property type="match status" value="1"/>
</dbReference>
<dbReference type="PRINTS" id="PR00389">
    <property type="entry name" value="PHPHLIPASEA2"/>
</dbReference>
<dbReference type="SMART" id="SM00085">
    <property type="entry name" value="PA2c"/>
    <property type="match status" value="1"/>
</dbReference>
<dbReference type="SUPFAM" id="SSF48619">
    <property type="entry name" value="Phospholipase A2, PLA2"/>
    <property type="match status" value="1"/>
</dbReference>
<reference evidence="4" key="1">
    <citation type="journal article" date="2016" name="Toxicon">
        <title>Biochemical and functional studies of ColTx-I, a new myotoxic phospholipase A2 isolated from Crotalus oreganus lutosus (Great Basin rattlesnake) snake venom.</title>
        <authorList>
            <person name="Almeida J.R."/>
            <person name="Resende L.M."/>
            <person name="Silva A.G."/>
            <person name="Ribeiro R.I."/>
            <person name="Stabeli R.G."/>
            <person name="Soares A.M."/>
            <person name="Calderon L.A."/>
            <person name="Marangoni S."/>
            <person name="Da Silva S.L."/>
        </authorList>
    </citation>
    <scope>PROTEIN SEQUENCE</scope>
    <scope>FUNCTION</scope>
    <scope>CATALYTIC ACTIVITY</scope>
    <scope>COFACTOR</scope>
    <scope>ACTIVITY REGULATION</scope>
    <scope>BIOPHYSICOCHEMICAL PROPERTIES</scope>
    <scope>SUBCELLULAR LOCATION</scope>
    <scope>MASS SPECTROMETRY</scope>
    <scope>IDENTIFICATION BY MASS SPECTROMETRY</scope>
    <source>
        <tissue evidence="3">Venom</tissue>
    </source>
</reference>